<accession>A6VLD8</accession>
<proteinExistence type="inferred from homology"/>
<evidence type="ECO:0000255" key="1">
    <source>
        <dbReference type="HAMAP-Rule" id="MF_00744"/>
    </source>
</evidence>
<dbReference type="EMBL" id="CP000746">
    <property type="protein sequence ID" value="ABR73785.1"/>
    <property type="molecule type" value="Genomic_DNA"/>
</dbReference>
<dbReference type="RefSeq" id="WP_012072170.1">
    <property type="nucleotide sequence ID" value="NC_009655.1"/>
</dbReference>
<dbReference type="SMR" id="A6VLD8"/>
<dbReference type="STRING" id="339671.Asuc_0407"/>
<dbReference type="KEGG" id="asu:Asuc_0407"/>
<dbReference type="eggNOG" id="COG3060">
    <property type="taxonomic scope" value="Bacteria"/>
</dbReference>
<dbReference type="HOGENOM" id="CLU_142318_0_0_6"/>
<dbReference type="OrthoDB" id="5680896at2"/>
<dbReference type="Proteomes" id="UP000001114">
    <property type="component" value="Chromosome"/>
</dbReference>
<dbReference type="GO" id="GO:0005737">
    <property type="term" value="C:cytoplasm"/>
    <property type="evidence" value="ECO:0007669"/>
    <property type="project" value="UniProtKB-SubCell"/>
</dbReference>
<dbReference type="GO" id="GO:0003677">
    <property type="term" value="F:DNA binding"/>
    <property type="evidence" value="ECO:0007669"/>
    <property type="project" value="UniProtKB-KW"/>
</dbReference>
<dbReference type="GO" id="GO:0003700">
    <property type="term" value="F:DNA-binding transcription factor activity"/>
    <property type="evidence" value="ECO:0007669"/>
    <property type="project" value="InterPro"/>
</dbReference>
<dbReference type="GO" id="GO:0009086">
    <property type="term" value="P:methionine biosynthetic process"/>
    <property type="evidence" value="ECO:0007669"/>
    <property type="project" value="UniProtKB-UniRule"/>
</dbReference>
<dbReference type="GO" id="GO:0045892">
    <property type="term" value="P:negative regulation of DNA-templated transcription"/>
    <property type="evidence" value="ECO:0007669"/>
    <property type="project" value="UniProtKB-UniRule"/>
</dbReference>
<dbReference type="Gene3D" id="1.10.140.10">
    <property type="entry name" value="MET Apo-Repressor, subunit A"/>
    <property type="match status" value="1"/>
</dbReference>
<dbReference type="HAMAP" id="MF_00744">
    <property type="entry name" value="MetJ"/>
    <property type="match status" value="1"/>
</dbReference>
<dbReference type="InterPro" id="IPR002084">
    <property type="entry name" value="Met_repressor_MetJ"/>
</dbReference>
<dbReference type="InterPro" id="IPR023453">
    <property type="entry name" value="Met_repressor_MetJ_dom_sf"/>
</dbReference>
<dbReference type="InterPro" id="IPR010985">
    <property type="entry name" value="Ribbon_hlx_hlx"/>
</dbReference>
<dbReference type="NCBIfam" id="NF003622">
    <property type="entry name" value="PRK05264.1"/>
    <property type="match status" value="1"/>
</dbReference>
<dbReference type="Pfam" id="PF01340">
    <property type="entry name" value="MetJ"/>
    <property type="match status" value="1"/>
</dbReference>
<dbReference type="SUPFAM" id="SSF47598">
    <property type="entry name" value="Ribbon-helix-helix"/>
    <property type="match status" value="1"/>
</dbReference>
<protein>
    <recommendedName>
        <fullName evidence="1">Met repressor</fullName>
    </recommendedName>
    <alternativeName>
        <fullName evidence="1">Met regulon regulatory protein MetJ</fullName>
    </alternativeName>
</protein>
<reference key="1">
    <citation type="journal article" date="2010" name="BMC Genomics">
        <title>A genomic perspective on the potential of Actinobacillus succinogenes for industrial succinate production.</title>
        <authorList>
            <person name="McKinlay J.B."/>
            <person name="Laivenieks M."/>
            <person name="Schindler B.D."/>
            <person name="McKinlay A.A."/>
            <person name="Siddaramappa S."/>
            <person name="Challacombe J.F."/>
            <person name="Lowry S.R."/>
            <person name="Clum A."/>
            <person name="Lapidus A.L."/>
            <person name="Burkhart K.B."/>
            <person name="Harkins V."/>
            <person name="Vieille C."/>
        </authorList>
    </citation>
    <scope>NUCLEOTIDE SEQUENCE [LARGE SCALE GENOMIC DNA]</scope>
    <source>
        <strain>ATCC 55618 / DSM 22257 / CCUG 43843 / 130Z</strain>
    </source>
</reference>
<sequence>MANWDGKYISPYVEHGKKSEQVKKITVSIPIKVLEILTNERTRRQIKNLRHATNSELLCEAFLHAFTGQPLPTDSDLLKERHDEIPEYAKQIMRESGVDPEEWEY</sequence>
<keyword id="KW-0028">Amino-acid biosynthesis</keyword>
<keyword id="KW-0963">Cytoplasm</keyword>
<keyword id="KW-0238">DNA-binding</keyword>
<keyword id="KW-0486">Methionine biosynthesis</keyword>
<keyword id="KW-1185">Reference proteome</keyword>
<keyword id="KW-0678">Repressor</keyword>
<keyword id="KW-0804">Transcription</keyword>
<keyword id="KW-0805">Transcription regulation</keyword>
<organism>
    <name type="scientific">Actinobacillus succinogenes (strain ATCC 55618 / DSM 22257 / CCUG 43843 / 130Z)</name>
    <dbReference type="NCBI Taxonomy" id="339671"/>
    <lineage>
        <taxon>Bacteria</taxon>
        <taxon>Pseudomonadati</taxon>
        <taxon>Pseudomonadota</taxon>
        <taxon>Gammaproteobacteria</taxon>
        <taxon>Pasteurellales</taxon>
        <taxon>Pasteurellaceae</taxon>
        <taxon>Actinobacillus</taxon>
    </lineage>
</organism>
<feature type="chain" id="PRO_1000072818" description="Met repressor">
    <location>
        <begin position="1"/>
        <end position="105"/>
    </location>
</feature>
<gene>
    <name evidence="1" type="primary">metJ</name>
    <name type="ordered locus">Asuc_0407</name>
</gene>
<name>METJ_ACTSZ</name>
<comment type="function">
    <text evidence="1">This regulatory protein, when combined with SAM (S-adenosylmethionine) represses the expression of the methionine regulon and of enzymes involved in SAM synthesis.</text>
</comment>
<comment type="subunit">
    <text evidence="1">Homodimer.</text>
</comment>
<comment type="subcellular location">
    <subcellularLocation>
        <location evidence="1">Cytoplasm</location>
    </subcellularLocation>
</comment>
<comment type="domain">
    <text>Does not bind DNA by a helix-turn-helix motif.</text>
</comment>
<comment type="similarity">
    <text evidence="1">Belongs to the MetJ family.</text>
</comment>